<organism>
    <name type="scientific">Bacillus velezensis (strain DSM 23117 / BGSC 10A6 / LMG 26770 / FZB42)</name>
    <name type="common">Bacillus amyloliquefaciens subsp. plantarum</name>
    <dbReference type="NCBI Taxonomy" id="326423"/>
    <lineage>
        <taxon>Bacteria</taxon>
        <taxon>Bacillati</taxon>
        <taxon>Bacillota</taxon>
        <taxon>Bacilli</taxon>
        <taxon>Bacillales</taxon>
        <taxon>Bacillaceae</taxon>
        <taxon>Bacillus</taxon>
        <taxon>Bacillus amyloliquefaciens group</taxon>
    </lineage>
</organism>
<accession>A7Z266</accession>
<feature type="chain" id="PRO_1000016066" description="Aspartyl/glutamyl-tRNA(Asn/Gln) amidotransferase subunit C">
    <location>
        <begin position="1"/>
        <end position="96"/>
    </location>
</feature>
<dbReference type="EC" id="6.3.5.-" evidence="1"/>
<dbReference type="EMBL" id="CP000560">
    <property type="protein sequence ID" value="ABS73092.1"/>
    <property type="molecule type" value="Genomic_DNA"/>
</dbReference>
<dbReference type="RefSeq" id="WP_003155732.1">
    <property type="nucleotide sequence ID" value="NC_009725.2"/>
</dbReference>
<dbReference type="SMR" id="A7Z266"/>
<dbReference type="GeneID" id="93079842"/>
<dbReference type="KEGG" id="bay:RBAM_007070"/>
<dbReference type="HOGENOM" id="CLU_105899_6_1_9"/>
<dbReference type="Proteomes" id="UP000001120">
    <property type="component" value="Chromosome"/>
</dbReference>
<dbReference type="GO" id="GO:0050566">
    <property type="term" value="F:asparaginyl-tRNA synthase (glutamine-hydrolyzing) activity"/>
    <property type="evidence" value="ECO:0007669"/>
    <property type="project" value="RHEA"/>
</dbReference>
<dbReference type="GO" id="GO:0005524">
    <property type="term" value="F:ATP binding"/>
    <property type="evidence" value="ECO:0007669"/>
    <property type="project" value="UniProtKB-KW"/>
</dbReference>
<dbReference type="GO" id="GO:0050567">
    <property type="term" value="F:glutaminyl-tRNA synthase (glutamine-hydrolyzing) activity"/>
    <property type="evidence" value="ECO:0007669"/>
    <property type="project" value="UniProtKB-UniRule"/>
</dbReference>
<dbReference type="GO" id="GO:0070681">
    <property type="term" value="P:glutaminyl-tRNAGln biosynthesis via transamidation"/>
    <property type="evidence" value="ECO:0007669"/>
    <property type="project" value="TreeGrafter"/>
</dbReference>
<dbReference type="GO" id="GO:0006450">
    <property type="term" value="P:regulation of translational fidelity"/>
    <property type="evidence" value="ECO:0007669"/>
    <property type="project" value="InterPro"/>
</dbReference>
<dbReference type="GO" id="GO:0006412">
    <property type="term" value="P:translation"/>
    <property type="evidence" value="ECO:0007669"/>
    <property type="project" value="UniProtKB-UniRule"/>
</dbReference>
<dbReference type="Gene3D" id="1.10.20.60">
    <property type="entry name" value="Glu-tRNAGln amidotransferase C subunit, N-terminal domain"/>
    <property type="match status" value="1"/>
</dbReference>
<dbReference type="HAMAP" id="MF_00122">
    <property type="entry name" value="GatC"/>
    <property type="match status" value="1"/>
</dbReference>
<dbReference type="InterPro" id="IPR036113">
    <property type="entry name" value="Asp/Glu-ADT_sf_sub_c"/>
</dbReference>
<dbReference type="InterPro" id="IPR003837">
    <property type="entry name" value="GatC"/>
</dbReference>
<dbReference type="NCBIfam" id="TIGR00135">
    <property type="entry name" value="gatC"/>
    <property type="match status" value="1"/>
</dbReference>
<dbReference type="PANTHER" id="PTHR15004">
    <property type="entry name" value="GLUTAMYL-TRNA(GLN) AMIDOTRANSFERASE SUBUNIT C, MITOCHONDRIAL"/>
    <property type="match status" value="1"/>
</dbReference>
<dbReference type="PANTHER" id="PTHR15004:SF0">
    <property type="entry name" value="GLUTAMYL-TRNA(GLN) AMIDOTRANSFERASE SUBUNIT C, MITOCHONDRIAL"/>
    <property type="match status" value="1"/>
</dbReference>
<dbReference type="Pfam" id="PF02686">
    <property type="entry name" value="GatC"/>
    <property type="match status" value="1"/>
</dbReference>
<dbReference type="SUPFAM" id="SSF141000">
    <property type="entry name" value="Glu-tRNAGln amidotransferase C subunit"/>
    <property type="match status" value="1"/>
</dbReference>
<protein>
    <recommendedName>
        <fullName evidence="1">Aspartyl/glutamyl-tRNA(Asn/Gln) amidotransferase subunit C</fullName>
        <shortName evidence="1">Asp/Glu-ADT subunit C</shortName>
        <ecNumber evidence="1">6.3.5.-</ecNumber>
    </recommendedName>
</protein>
<sequence length="96" mass="10833">MSRISIEEVKHVAHLARLAITDEEAEMFTEQLDSIISFAEELNEVDTDNVEPTTHVLKMKNVMREDEAGKGLPVEDVMKNAPDHKDGYVRVPSILD</sequence>
<reference key="1">
    <citation type="journal article" date="2007" name="Nat. Biotechnol.">
        <title>Comparative analysis of the complete genome sequence of the plant growth-promoting bacterium Bacillus amyloliquefaciens FZB42.</title>
        <authorList>
            <person name="Chen X.H."/>
            <person name="Koumoutsi A."/>
            <person name="Scholz R."/>
            <person name="Eisenreich A."/>
            <person name="Schneider K."/>
            <person name="Heinemeyer I."/>
            <person name="Morgenstern B."/>
            <person name="Voss B."/>
            <person name="Hess W.R."/>
            <person name="Reva O."/>
            <person name="Junge H."/>
            <person name="Voigt B."/>
            <person name="Jungblut P.R."/>
            <person name="Vater J."/>
            <person name="Suessmuth R."/>
            <person name="Liesegang H."/>
            <person name="Strittmatter A."/>
            <person name="Gottschalk G."/>
            <person name="Borriss R."/>
        </authorList>
    </citation>
    <scope>NUCLEOTIDE SEQUENCE [LARGE SCALE GENOMIC DNA]</scope>
    <source>
        <strain>DSM 23117 / BGSC 10A6 / LMG 26770 / FZB42</strain>
    </source>
</reference>
<proteinExistence type="inferred from homology"/>
<comment type="function">
    <text evidence="1">Allows the formation of correctly charged Asn-tRNA(Asn) or Gln-tRNA(Gln) through the transamidation of misacylated Asp-tRNA(Asn) or Glu-tRNA(Gln) in organisms which lack either or both of asparaginyl-tRNA or glutaminyl-tRNA synthetases. The reaction takes place in the presence of glutamine and ATP through an activated phospho-Asp-tRNA(Asn) or phospho-Glu-tRNA(Gln).</text>
</comment>
<comment type="catalytic activity">
    <reaction evidence="1">
        <text>L-glutamyl-tRNA(Gln) + L-glutamine + ATP + H2O = L-glutaminyl-tRNA(Gln) + L-glutamate + ADP + phosphate + H(+)</text>
        <dbReference type="Rhea" id="RHEA:17521"/>
        <dbReference type="Rhea" id="RHEA-COMP:9681"/>
        <dbReference type="Rhea" id="RHEA-COMP:9684"/>
        <dbReference type="ChEBI" id="CHEBI:15377"/>
        <dbReference type="ChEBI" id="CHEBI:15378"/>
        <dbReference type="ChEBI" id="CHEBI:29985"/>
        <dbReference type="ChEBI" id="CHEBI:30616"/>
        <dbReference type="ChEBI" id="CHEBI:43474"/>
        <dbReference type="ChEBI" id="CHEBI:58359"/>
        <dbReference type="ChEBI" id="CHEBI:78520"/>
        <dbReference type="ChEBI" id="CHEBI:78521"/>
        <dbReference type="ChEBI" id="CHEBI:456216"/>
    </reaction>
</comment>
<comment type="catalytic activity">
    <reaction evidence="1">
        <text>L-aspartyl-tRNA(Asn) + L-glutamine + ATP + H2O = L-asparaginyl-tRNA(Asn) + L-glutamate + ADP + phosphate + 2 H(+)</text>
        <dbReference type="Rhea" id="RHEA:14513"/>
        <dbReference type="Rhea" id="RHEA-COMP:9674"/>
        <dbReference type="Rhea" id="RHEA-COMP:9677"/>
        <dbReference type="ChEBI" id="CHEBI:15377"/>
        <dbReference type="ChEBI" id="CHEBI:15378"/>
        <dbReference type="ChEBI" id="CHEBI:29985"/>
        <dbReference type="ChEBI" id="CHEBI:30616"/>
        <dbReference type="ChEBI" id="CHEBI:43474"/>
        <dbReference type="ChEBI" id="CHEBI:58359"/>
        <dbReference type="ChEBI" id="CHEBI:78515"/>
        <dbReference type="ChEBI" id="CHEBI:78516"/>
        <dbReference type="ChEBI" id="CHEBI:456216"/>
    </reaction>
</comment>
<comment type="subunit">
    <text evidence="1">Heterotrimer of A, B and C subunits.</text>
</comment>
<comment type="similarity">
    <text evidence="1">Belongs to the GatC family.</text>
</comment>
<gene>
    <name evidence="1" type="primary">gatC</name>
    <name type="ordered locus">RBAM_007070</name>
</gene>
<name>GATC_BACVZ</name>
<evidence type="ECO:0000255" key="1">
    <source>
        <dbReference type="HAMAP-Rule" id="MF_00122"/>
    </source>
</evidence>
<keyword id="KW-0067">ATP-binding</keyword>
<keyword id="KW-0436">Ligase</keyword>
<keyword id="KW-0547">Nucleotide-binding</keyword>
<keyword id="KW-0648">Protein biosynthesis</keyword>